<gene>
    <name type="primary">MT-ND5</name>
    <name type="synonym">MTND5</name>
    <name type="synonym">NADH5</name>
    <name type="synonym">ND5</name>
</gene>
<feature type="chain" id="PRO_0000118128" description="NADH-ubiquinone oxidoreductase chain 5">
    <location>
        <begin position="1"/>
        <end position="605"/>
    </location>
</feature>
<feature type="transmembrane region" description="Helical" evidence="2">
    <location>
        <begin position="11"/>
        <end position="31"/>
    </location>
</feature>
<feature type="transmembrane region" description="Helical" evidence="2">
    <location>
        <begin position="49"/>
        <end position="69"/>
    </location>
</feature>
<feature type="transmembrane region" description="Helical" evidence="2">
    <location>
        <begin position="77"/>
        <end position="97"/>
    </location>
</feature>
<feature type="transmembrane region" description="Helical" evidence="2">
    <location>
        <begin position="120"/>
        <end position="140"/>
    </location>
</feature>
<feature type="transmembrane region" description="Helical" evidence="2">
    <location>
        <begin position="141"/>
        <end position="161"/>
    </location>
</feature>
<feature type="transmembrane region" description="Helical" evidence="2">
    <location>
        <begin position="178"/>
        <end position="198"/>
    </location>
</feature>
<feature type="transmembrane region" description="Helical" evidence="2">
    <location>
        <begin position="202"/>
        <end position="222"/>
    </location>
</feature>
<feature type="transmembrane region" description="Helical" evidence="2">
    <location>
        <begin position="244"/>
        <end position="264"/>
    </location>
</feature>
<feature type="transmembrane region" description="Helical" evidence="2">
    <location>
        <begin position="273"/>
        <end position="295"/>
    </location>
</feature>
<feature type="transmembrane region" description="Helical" evidence="2">
    <location>
        <begin position="302"/>
        <end position="322"/>
    </location>
</feature>
<feature type="transmembrane region" description="Helical" evidence="2">
    <location>
        <begin position="325"/>
        <end position="345"/>
    </location>
</feature>
<feature type="transmembrane region" description="Helical" evidence="2">
    <location>
        <begin position="371"/>
        <end position="391"/>
    </location>
</feature>
<feature type="transmembrane region" description="Helical" evidence="2">
    <location>
        <begin position="408"/>
        <end position="425"/>
    </location>
</feature>
<feature type="transmembrane region" description="Helical" evidence="2">
    <location>
        <begin position="457"/>
        <end position="477"/>
    </location>
</feature>
<feature type="transmembrane region" description="Helical" evidence="2">
    <location>
        <begin position="488"/>
        <end position="508"/>
    </location>
</feature>
<feature type="transmembrane region" description="Helical" evidence="2">
    <location>
        <begin position="584"/>
        <end position="604"/>
    </location>
</feature>
<dbReference type="EC" id="7.1.1.2"/>
<dbReference type="EMBL" id="AF039066">
    <property type="protein sequence ID" value="AAD05058.1"/>
    <property type="molecule type" value="Genomic_DNA"/>
</dbReference>
<dbReference type="PIR" id="T11111">
    <property type="entry name" value="T11111"/>
</dbReference>
<dbReference type="RefSeq" id="NP_008442.1">
    <property type="nucleotide sequence ID" value="NC_001947.1"/>
</dbReference>
<dbReference type="SMR" id="O79678"/>
<dbReference type="GeneID" id="808282"/>
<dbReference type="CTD" id="4540"/>
<dbReference type="GO" id="GO:0005743">
    <property type="term" value="C:mitochondrial inner membrane"/>
    <property type="evidence" value="ECO:0007669"/>
    <property type="project" value="UniProtKB-SubCell"/>
</dbReference>
<dbReference type="GO" id="GO:0008137">
    <property type="term" value="F:NADH dehydrogenase (ubiquinone) activity"/>
    <property type="evidence" value="ECO:0007669"/>
    <property type="project" value="UniProtKB-EC"/>
</dbReference>
<dbReference type="GO" id="GO:0042773">
    <property type="term" value="P:ATP synthesis coupled electron transport"/>
    <property type="evidence" value="ECO:0007669"/>
    <property type="project" value="InterPro"/>
</dbReference>
<dbReference type="GO" id="GO:0015990">
    <property type="term" value="P:electron transport coupled proton transport"/>
    <property type="evidence" value="ECO:0007669"/>
    <property type="project" value="TreeGrafter"/>
</dbReference>
<dbReference type="InterPro" id="IPR010934">
    <property type="entry name" value="NADH_DH_su5_C"/>
</dbReference>
<dbReference type="InterPro" id="IPR001750">
    <property type="entry name" value="ND/Mrp_TM"/>
</dbReference>
<dbReference type="InterPro" id="IPR003945">
    <property type="entry name" value="NU5C-like"/>
</dbReference>
<dbReference type="InterPro" id="IPR001516">
    <property type="entry name" value="Proton_antipo_N"/>
</dbReference>
<dbReference type="PANTHER" id="PTHR42829">
    <property type="entry name" value="NADH-UBIQUINONE OXIDOREDUCTASE CHAIN 5"/>
    <property type="match status" value="1"/>
</dbReference>
<dbReference type="PANTHER" id="PTHR42829:SF2">
    <property type="entry name" value="NADH-UBIQUINONE OXIDOREDUCTASE CHAIN 5"/>
    <property type="match status" value="1"/>
</dbReference>
<dbReference type="Pfam" id="PF06455">
    <property type="entry name" value="NADH5_C"/>
    <property type="match status" value="1"/>
</dbReference>
<dbReference type="Pfam" id="PF00361">
    <property type="entry name" value="Proton_antipo_M"/>
    <property type="match status" value="1"/>
</dbReference>
<dbReference type="Pfam" id="PF00662">
    <property type="entry name" value="Proton_antipo_N"/>
    <property type="match status" value="1"/>
</dbReference>
<dbReference type="PRINTS" id="PR01434">
    <property type="entry name" value="NADHDHGNASE5"/>
</dbReference>
<proteinExistence type="inferred from homology"/>
<geneLocation type="mitochondrion"/>
<keyword id="KW-0249">Electron transport</keyword>
<keyword id="KW-0472">Membrane</keyword>
<keyword id="KW-0496">Mitochondrion</keyword>
<keyword id="KW-0999">Mitochondrion inner membrane</keyword>
<keyword id="KW-0520">NAD</keyword>
<keyword id="KW-0679">Respiratory chain</keyword>
<keyword id="KW-1278">Translocase</keyword>
<keyword id="KW-0812">Transmembrane</keyword>
<keyword id="KW-1133">Transmembrane helix</keyword>
<keyword id="KW-0813">Transport</keyword>
<keyword id="KW-0830">Ubiquinone</keyword>
<protein>
    <recommendedName>
        <fullName>NADH-ubiquinone oxidoreductase chain 5</fullName>
        <ecNumber>7.1.1.2</ecNumber>
    </recommendedName>
    <alternativeName>
        <fullName>NADH dehydrogenase subunit 5</fullName>
    </alternativeName>
</protein>
<sequence length="605" mass="67637">MPNLQLILKTILITELLILALSALMTMLPPILNKLTWDPEKAMTTTFRLSLTSILIHILIEEPSSISSLYSPTMLNLAMSIKIDYYSLIFISIALFITRAILQYTKWYMASDRDLKKFSMFLLLFLMSMIMFIAANNFFPMLVGWGTMGLMSYLLISWWHGRTEATTSGLQAILYNRLADIGFILTFSWCITYMSSLDLNTFFATSTLVTGVPILGMLMAAMGKSAQFGMHPWLPAAMEGPTPVSALLHSSTMVTAGVYLLIGMHPILSQTQGFSEACLTMGAATALYASFKALLQNDLKKIIAFSTLSQLGFMMATVGLNHPNLAFMHLCMHAFFKAMMFLCAGSISHALFGEQDIRKMSGMIKVTPITASCFTLSTLALAGFPFLTGFFSKDLIIETILLSKINMLWATMLLISTMFTAIYSLRMTLRILTGTPWYNDLLTYEENPTCTKPIMKLALASIVTGSLFSLFTPPIYTPLQTMPPTIKLAALTLTFMSAFLAMYLISLANNKPLPKNTIQNHMLQTAKDLKIITHRHLMAKLLKASQKTALQILDNHWKLKAGPKYIEKTQIPMSMKTSTQSGLIKTYFMAFLVTFVIILYIMLFY</sequence>
<accession>O79678</accession>
<comment type="function">
    <text evidence="1">Core subunit of the mitochondrial membrane respiratory chain NADH dehydrogenase (Complex I) that is believed to belong to the minimal assembly required for catalysis. Complex I functions in the transfer of electrons from NADH to the respiratory chain. The immediate electron acceptor for the enzyme is believed to be ubiquinone (By similarity).</text>
</comment>
<comment type="catalytic activity">
    <reaction>
        <text>a ubiquinone + NADH + 5 H(+)(in) = a ubiquinol + NAD(+) + 4 H(+)(out)</text>
        <dbReference type="Rhea" id="RHEA:29091"/>
        <dbReference type="Rhea" id="RHEA-COMP:9565"/>
        <dbReference type="Rhea" id="RHEA-COMP:9566"/>
        <dbReference type="ChEBI" id="CHEBI:15378"/>
        <dbReference type="ChEBI" id="CHEBI:16389"/>
        <dbReference type="ChEBI" id="CHEBI:17976"/>
        <dbReference type="ChEBI" id="CHEBI:57540"/>
        <dbReference type="ChEBI" id="CHEBI:57945"/>
        <dbReference type="EC" id="7.1.1.2"/>
    </reaction>
</comment>
<comment type="subcellular location">
    <subcellularLocation>
        <location evidence="1">Mitochondrion inner membrane</location>
        <topology evidence="1">Multi-pass membrane protein</topology>
    </subcellularLocation>
</comment>
<comment type="similarity">
    <text evidence="3">Belongs to the complex I subunit 5 family.</text>
</comment>
<reference key="1">
    <citation type="journal article" date="1998" name="Proc. Natl. Acad. Sci. U.S.A.">
        <title>Complete mitochondrial genome suggests diapsid affinities of turtles.</title>
        <authorList>
            <person name="Zardoya R."/>
            <person name="Meyer A."/>
        </authorList>
    </citation>
    <scope>NUCLEOTIDE SEQUENCE [GENOMIC DNA]</scope>
</reference>
<evidence type="ECO:0000250" key="1"/>
<evidence type="ECO:0000255" key="2"/>
<evidence type="ECO:0000305" key="3"/>
<organism>
    <name type="scientific">Pelomedusa subrufa</name>
    <name type="common">African side-necked turtle</name>
    <dbReference type="NCBI Taxonomy" id="44522"/>
    <lineage>
        <taxon>Eukaryota</taxon>
        <taxon>Metazoa</taxon>
        <taxon>Chordata</taxon>
        <taxon>Craniata</taxon>
        <taxon>Vertebrata</taxon>
        <taxon>Euteleostomi</taxon>
        <taxon>Archelosauria</taxon>
        <taxon>Testudinata</taxon>
        <taxon>Testudines</taxon>
        <taxon>Pleurodira</taxon>
        <taxon>Pelomedusidae</taxon>
        <taxon>Pelomedusa</taxon>
    </lineage>
</organism>
<name>NU5M_PELSU</name>